<proteinExistence type="evidence at protein level"/>
<keyword id="KW-0002">3D-structure</keyword>
<keyword id="KW-0052">Apoplast</keyword>
<keyword id="KW-1015">Disulfide bond</keyword>
<keyword id="KW-0325">Glycoprotein</keyword>
<keyword id="KW-1185">Reference proteome</keyword>
<keyword id="KW-0964">Secreted</keyword>
<keyword id="KW-0732">Signal</keyword>
<gene>
    <name type="primary">DIR6</name>
    <name type="ordered locus">At4g23690</name>
    <name type="ORF">F9D16.160</name>
</gene>
<accession>Q9SUQ8</accession>
<evidence type="ECO:0000269" key="1">
    <source>
    </source>
</evidence>
<evidence type="ECO:0000269" key="2">
    <source>
    </source>
</evidence>
<evidence type="ECO:0000269" key="3">
    <source>
    </source>
</evidence>
<evidence type="ECO:0000305" key="4"/>
<evidence type="ECO:0007829" key="5">
    <source>
        <dbReference type="PDB" id="5LAL"/>
    </source>
</evidence>
<name>DIR6_ARATH</name>
<feature type="signal peptide" evidence="1">
    <location>
        <begin position="1"/>
        <end position="29"/>
    </location>
</feature>
<feature type="chain" id="PRO_0000422837" description="Dirigent protein 6">
    <location>
        <begin position="30"/>
        <end position="187"/>
    </location>
</feature>
<feature type="glycosylation site" description="N-linked (GlcNAc...) asparagine" evidence="2">
    <location>
        <position position="59"/>
    </location>
</feature>
<feature type="glycosylation site" description="N-linked (GlcNAc...) asparagine" evidence="2">
    <location>
        <position position="123"/>
    </location>
</feature>
<feature type="disulfide bond" evidence="2">
    <location>
        <begin position="40"/>
        <end position="186"/>
    </location>
</feature>
<feature type="strand" evidence="5">
    <location>
        <begin position="40"/>
        <end position="51"/>
    </location>
</feature>
<feature type="turn" evidence="5">
    <location>
        <begin position="57"/>
        <end position="59"/>
    </location>
</feature>
<feature type="strand" evidence="5">
    <location>
        <begin position="62"/>
        <end position="64"/>
    </location>
</feature>
<feature type="strand" evidence="5">
    <location>
        <begin position="71"/>
        <end position="74"/>
    </location>
</feature>
<feature type="strand" evidence="5">
    <location>
        <begin position="79"/>
        <end position="90"/>
    </location>
</feature>
<feature type="strand" evidence="5">
    <location>
        <begin position="97"/>
        <end position="106"/>
    </location>
</feature>
<feature type="strand" evidence="5">
    <location>
        <begin position="109"/>
        <end position="111"/>
    </location>
</feature>
<feature type="strand" evidence="5">
    <location>
        <begin position="114"/>
        <end position="126"/>
    </location>
</feature>
<feature type="strand" evidence="5">
    <location>
        <begin position="128"/>
        <end position="137"/>
    </location>
</feature>
<feature type="strand" evidence="5">
    <location>
        <begin position="141"/>
        <end position="153"/>
    </location>
</feature>
<feature type="turn" evidence="5">
    <location>
        <begin position="154"/>
        <end position="157"/>
    </location>
</feature>
<feature type="strand" evidence="5">
    <location>
        <begin position="159"/>
        <end position="170"/>
    </location>
</feature>
<feature type="turn" evidence="5">
    <location>
        <begin position="171"/>
        <end position="173"/>
    </location>
</feature>
<feature type="strand" evidence="5">
    <location>
        <begin position="174"/>
        <end position="186"/>
    </location>
</feature>
<organism>
    <name type="scientific">Arabidopsis thaliana</name>
    <name type="common">Mouse-ear cress</name>
    <dbReference type="NCBI Taxonomy" id="3702"/>
    <lineage>
        <taxon>Eukaryota</taxon>
        <taxon>Viridiplantae</taxon>
        <taxon>Streptophyta</taxon>
        <taxon>Embryophyta</taxon>
        <taxon>Tracheophyta</taxon>
        <taxon>Spermatophyta</taxon>
        <taxon>Magnoliopsida</taxon>
        <taxon>eudicotyledons</taxon>
        <taxon>Gunneridae</taxon>
        <taxon>Pentapetalae</taxon>
        <taxon>rosids</taxon>
        <taxon>malvids</taxon>
        <taxon>Brassicales</taxon>
        <taxon>Brassicaceae</taxon>
        <taxon>Camelineae</taxon>
        <taxon>Arabidopsis</taxon>
    </lineage>
</organism>
<reference key="1">
    <citation type="journal article" date="1999" name="Nature">
        <title>Sequence and analysis of chromosome 4 of the plant Arabidopsis thaliana.</title>
        <authorList>
            <person name="Mayer K.F.X."/>
            <person name="Schueller C."/>
            <person name="Wambutt R."/>
            <person name="Murphy G."/>
            <person name="Volckaert G."/>
            <person name="Pohl T."/>
            <person name="Duesterhoeft A."/>
            <person name="Stiekema W."/>
            <person name="Entian K.-D."/>
            <person name="Terryn N."/>
            <person name="Harris B."/>
            <person name="Ansorge W."/>
            <person name="Brandt P."/>
            <person name="Grivell L.A."/>
            <person name="Rieger M."/>
            <person name="Weichselgartner M."/>
            <person name="de Simone V."/>
            <person name="Obermaier B."/>
            <person name="Mache R."/>
            <person name="Mueller M."/>
            <person name="Kreis M."/>
            <person name="Delseny M."/>
            <person name="Puigdomenech P."/>
            <person name="Watson M."/>
            <person name="Schmidtheini T."/>
            <person name="Reichert B."/>
            <person name="Portetelle D."/>
            <person name="Perez-Alonso M."/>
            <person name="Boutry M."/>
            <person name="Bancroft I."/>
            <person name="Vos P."/>
            <person name="Hoheisel J."/>
            <person name="Zimmermann W."/>
            <person name="Wedler H."/>
            <person name="Ridley P."/>
            <person name="Langham S.-A."/>
            <person name="McCullagh B."/>
            <person name="Bilham L."/>
            <person name="Robben J."/>
            <person name="van der Schueren J."/>
            <person name="Grymonprez B."/>
            <person name="Chuang Y.-J."/>
            <person name="Vandenbussche F."/>
            <person name="Braeken M."/>
            <person name="Weltjens I."/>
            <person name="Voet M."/>
            <person name="Bastiaens I."/>
            <person name="Aert R."/>
            <person name="Defoor E."/>
            <person name="Weitzenegger T."/>
            <person name="Bothe G."/>
            <person name="Ramsperger U."/>
            <person name="Hilbert H."/>
            <person name="Braun M."/>
            <person name="Holzer E."/>
            <person name="Brandt A."/>
            <person name="Peters S."/>
            <person name="van Staveren M."/>
            <person name="Dirkse W."/>
            <person name="Mooijman P."/>
            <person name="Klein Lankhorst R."/>
            <person name="Rose M."/>
            <person name="Hauf J."/>
            <person name="Koetter P."/>
            <person name="Berneiser S."/>
            <person name="Hempel S."/>
            <person name="Feldpausch M."/>
            <person name="Lamberth S."/>
            <person name="Van den Daele H."/>
            <person name="De Keyser A."/>
            <person name="Buysshaert C."/>
            <person name="Gielen J."/>
            <person name="Villarroel R."/>
            <person name="De Clercq R."/>
            <person name="van Montagu M."/>
            <person name="Rogers J."/>
            <person name="Cronin A."/>
            <person name="Quail M.A."/>
            <person name="Bray-Allen S."/>
            <person name="Clark L."/>
            <person name="Doggett J."/>
            <person name="Hall S."/>
            <person name="Kay M."/>
            <person name="Lennard N."/>
            <person name="McLay K."/>
            <person name="Mayes R."/>
            <person name="Pettett A."/>
            <person name="Rajandream M.A."/>
            <person name="Lyne M."/>
            <person name="Benes V."/>
            <person name="Rechmann S."/>
            <person name="Borkova D."/>
            <person name="Bloecker H."/>
            <person name="Scharfe M."/>
            <person name="Grimm M."/>
            <person name="Loehnert T.-H."/>
            <person name="Dose S."/>
            <person name="de Haan M."/>
            <person name="Maarse A.C."/>
            <person name="Schaefer M."/>
            <person name="Mueller-Auer S."/>
            <person name="Gabel C."/>
            <person name="Fuchs M."/>
            <person name="Fartmann B."/>
            <person name="Granderath K."/>
            <person name="Dauner D."/>
            <person name="Herzl A."/>
            <person name="Neumann S."/>
            <person name="Argiriou A."/>
            <person name="Vitale D."/>
            <person name="Liguori R."/>
            <person name="Piravandi E."/>
            <person name="Massenet O."/>
            <person name="Quigley F."/>
            <person name="Clabauld G."/>
            <person name="Muendlein A."/>
            <person name="Felber R."/>
            <person name="Schnabl S."/>
            <person name="Hiller R."/>
            <person name="Schmidt W."/>
            <person name="Lecharny A."/>
            <person name="Aubourg S."/>
            <person name="Chefdor F."/>
            <person name="Cooke R."/>
            <person name="Berger C."/>
            <person name="Monfort A."/>
            <person name="Casacuberta E."/>
            <person name="Gibbons T."/>
            <person name="Weber N."/>
            <person name="Vandenbol M."/>
            <person name="Bargues M."/>
            <person name="Terol J."/>
            <person name="Torres A."/>
            <person name="Perez-Perez A."/>
            <person name="Purnelle B."/>
            <person name="Bent E."/>
            <person name="Johnson S."/>
            <person name="Tacon D."/>
            <person name="Jesse T."/>
            <person name="Heijnen L."/>
            <person name="Schwarz S."/>
            <person name="Scholler P."/>
            <person name="Heber S."/>
            <person name="Francs P."/>
            <person name="Bielke C."/>
            <person name="Frishman D."/>
            <person name="Haase D."/>
            <person name="Lemcke K."/>
            <person name="Mewes H.-W."/>
            <person name="Stocker S."/>
            <person name="Zaccaria P."/>
            <person name="Bevan M."/>
            <person name="Wilson R.K."/>
            <person name="de la Bastide M."/>
            <person name="Habermann K."/>
            <person name="Parnell L."/>
            <person name="Dedhia N."/>
            <person name="Gnoj L."/>
            <person name="Schutz K."/>
            <person name="Huang E."/>
            <person name="Spiegel L."/>
            <person name="Sekhon M."/>
            <person name="Murray J."/>
            <person name="Sheet P."/>
            <person name="Cordes M."/>
            <person name="Abu-Threideh J."/>
            <person name="Stoneking T."/>
            <person name="Kalicki J."/>
            <person name="Graves T."/>
            <person name="Harmon G."/>
            <person name="Edwards J."/>
            <person name="Latreille P."/>
            <person name="Courtney L."/>
            <person name="Cloud J."/>
            <person name="Abbott A."/>
            <person name="Scott K."/>
            <person name="Johnson D."/>
            <person name="Minx P."/>
            <person name="Bentley D."/>
            <person name="Fulton B."/>
            <person name="Miller N."/>
            <person name="Greco T."/>
            <person name="Kemp K."/>
            <person name="Kramer J."/>
            <person name="Fulton L."/>
            <person name="Mardis E."/>
            <person name="Dante M."/>
            <person name="Pepin K."/>
            <person name="Hillier L.W."/>
            <person name="Nelson J."/>
            <person name="Spieth J."/>
            <person name="Ryan E."/>
            <person name="Andrews S."/>
            <person name="Geisel C."/>
            <person name="Layman D."/>
            <person name="Du H."/>
            <person name="Ali J."/>
            <person name="Berghoff A."/>
            <person name="Jones K."/>
            <person name="Drone K."/>
            <person name="Cotton M."/>
            <person name="Joshu C."/>
            <person name="Antonoiu B."/>
            <person name="Zidanic M."/>
            <person name="Strong C."/>
            <person name="Sun H."/>
            <person name="Lamar B."/>
            <person name="Yordan C."/>
            <person name="Ma P."/>
            <person name="Zhong J."/>
            <person name="Preston R."/>
            <person name="Vil D."/>
            <person name="Shekher M."/>
            <person name="Matero A."/>
            <person name="Shah R."/>
            <person name="Swaby I.K."/>
            <person name="O'Shaughnessy A."/>
            <person name="Rodriguez M."/>
            <person name="Hoffman J."/>
            <person name="Till S."/>
            <person name="Granat S."/>
            <person name="Shohdy N."/>
            <person name="Hasegawa A."/>
            <person name="Hameed A."/>
            <person name="Lodhi M."/>
            <person name="Johnson A."/>
            <person name="Chen E."/>
            <person name="Marra M.A."/>
            <person name="Martienssen R."/>
            <person name="McCombie W.R."/>
        </authorList>
    </citation>
    <scope>NUCLEOTIDE SEQUENCE [LARGE SCALE GENOMIC DNA]</scope>
    <source>
        <strain>cv. Columbia</strain>
    </source>
</reference>
<reference key="2">
    <citation type="journal article" date="2017" name="Plant J.">
        <title>Araport11: a complete reannotation of the Arabidopsis thaliana reference genome.</title>
        <authorList>
            <person name="Cheng C.Y."/>
            <person name="Krishnakumar V."/>
            <person name="Chan A.P."/>
            <person name="Thibaud-Nissen F."/>
            <person name="Schobel S."/>
            <person name="Town C.D."/>
        </authorList>
    </citation>
    <scope>GENOME REANNOTATION</scope>
    <source>
        <strain>cv. Columbia</strain>
    </source>
</reference>
<reference key="3">
    <citation type="journal article" date="2003" name="Science">
        <title>Empirical analysis of transcriptional activity in the Arabidopsis genome.</title>
        <authorList>
            <person name="Yamada K."/>
            <person name="Lim J."/>
            <person name="Dale J.M."/>
            <person name="Chen H."/>
            <person name="Shinn P."/>
            <person name="Palm C.J."/>
            <person name="Southwick A.M."/>
            <person name="Wu H.C."/>
            <person name="Kim C.J."/>
            <person name="Nguyen M."/>
            <person name="Pham P.K."/>
            <person name="Cheuk R.F."/>
            <person name="Karlin-Newmann G."/>
            <person name="Liu S.X."/>
            <person name="Lam B."/>
            <person name="Sakano H."/>
            <person name="Wu T."/>
            <person name="Yu G."/>
            <person name="Miranda M."/>
            <person name="Quach H.L."/>
            <person name="Tripp M."/>
            <person name="Chang C.H."/>
            <person name="Lee J.M."/>
            <person name="Toriumi M.J."/>
            <person name="Chan M.M."/>
            <person name="Tang C.C."/>
            <person name="Onodera C.S."/>
            <person name="Deng J.M."/>
            <person name="Akiyama K."/>
            <person name="Ansari Y."/>
            <person name="Arakawa T."/>
            <person name="Banh J."/>
            <person name="Banno F."/>
            <person name="Bowser L."/>
            <person name="Brooks S.Y."/>
            <person name="Carninci P."/>
            <person name="Chao Q."/>
            <person name="Choy N."/>
            <person name="Enju A."/>
            <person name="Goldsmith A.D."/>
            <person name="Gurjal M."/>
            <person name="Hansen N.F."/>
            <person name="Hayashizaki Y."/>
            <person name="Johnson-Hopson C."/>
            <person name="Hsuan V.W."/>
            <person name="Iida K."/>
            <person name="Karnes M."/>
            <person name="Khan S."/>
            <person name="Koesema E."/>
            <person name="Ishida J."/>
            <person name="Jiang P.X."/>
            <person name="Jones T."/>
            <person name="Kawai J."/>
            <person name="Kamiya A."/>
            <person name="Meyers C."/>
            <person name="Nakajima M."/>
            <person name="Narusaka M."/>
            <person name="Seki M."/>
            <person name="Sakurai T."/>
            <person name="Satou M."/>
            <person name="Tamse R."/>
            <person name="Vaysberg M."/>
            <person name="Wallender E.K."/>
            <person name="Wong C."/>
            <person name="Yamamura Y."/>
            <person name="Yuan S."/>
            <person name="Shinozaki K."/>
            <person name="Davis R.W."/>
            <person name="Theologis A."/>
            <person name="Ecker J.R."/>
        </authorList>
    </citation>
    <scope>NUCLEOTIDE SEQUENCE [LARGE SCALE MRNA]</scope>
    <source>
        <strain>cv. Columbia</strain>
    </source>
</reference>
<reference key="4">
    <citation type="submission" date="2002-03" db="EMBL/GenBank/DDBJ databases">
        <title>Full-length cDNA from Arabidopsis thaliana.</title>
        <authorList>
            <person name="Brover V.V."/>
            <person name="Troukhan M.E."/>
            <person name="Alexandrov N.A."/>
            <person name="Lu Y.-P."/>
            <person name="Flavell R.B."/>
            <person name="Feldmann K.A."/>
        </authorList>
    </citation>
    <scope>NUCLEOTIDE SEQUENCE [LARGE SCALE MRNA]</scope>
</reference>
<reference key="5">
    <citation type="journal article" date="2007" name="Phytochemistry">
        <title>Dirigent proteins in conifer defense II: Extended gene discovery, phylogeny, and constitutive and stress-induced gene expression in spruce (Picea spp.).</title>
        <authorList>
            <person name="Ralph S.G."/>
            <person name="Jancsik S."/>
            <person name="Bohlmann J."/>
        </authorList>
    </citation>
    <scope>GENE FAMILY</scope>
    <scope>NOMENCLATURE</scope>
</reference>
<reference key="6">
    <citation type="journal article" date="2010" name="Angew. Chem. Int. Ed. Engl.">
        <title>An enantiocomplementary dirigent protein for the enantioselective laccase-catalyzed oxidative coupling of phenols.</title>
        <authorList>
            <person name="Pickel B."/>
            <person name="Constantin M.A."/>
            <person name="Pfannstiel J."/>
            <person name="Conrad J."/>
            <person name="Beifuss U."/>
            <person name="Schaller A."/>
        </authorList>
    </citation>
    <scope>FUNCTION</scope>
    <scope>GLYCOSYLATION</scope>
    <scope>SIGNAL SEQUENCE CLEAVAGE SITE</scope>
    <scope>IDENTIFICATION BY MASS SPECTROMETRY</scope>
</reference>
<reference key="7">
    <citation type="journal article" date="2012" name="FEBS J.">
        <title>A model of dirigent proteins derived from structural and functional similarities with allene oxide cyclase and lipocalins.</title>
        <authorList>
            <person name="Pickel B."/>
            <person name="Pfannstiel J."/>
            <person name="Steudle A."/>
            <person name="Lehmann A."/>
            <person name="Gerken U."/>
            <person name="Pleiss J."/>
            <person name="Schaller A."/>
        </authorList>
    </citation>
    <scope>SUBUNIT</scope>
    <scope>GLYCOSYLATION AT ASN-59 AND ASN-123</scope>
    <scope>DISULFIDE BOND</scope>
    <scope>IDENTIFICATION BY MASS SPECTROMETRY</scope>
</reference>
<reference key="8">
    <citation type="journal article" date="2012" name="J. Biol. Chem.">
        <title>Opposite stereoselectivities of dirigent proteins in Arabidopsis and schizandra species.</title>
        <authorList>
            <person name="Kim K.-W."/>
            <person name="Moinuddin S.G.A."/>
            <person name="Atwell K.M."/>
            <person name="Costa M.A."/>
            <person name="Davin L.B."/>
            <person name="Lewis N.G."/>
        </authorList>
    </citation>
    <scope>FUNCTION</scope>
    <scope>TISSUE SPECIFICITY</scope>
    <scope>DEVELOPMENTAL STAGE</scope>
    <scope>GENE FAMILY</scope>
    <source>
        <strain>cv. Columbia</strain>
    </source>
</reference>
<protein>
    <recommendedName>
        <fullName>Dirigent protein 6</fullName>
        <shortName>AtDIR6</shortName>
    </recommendedName>
</protein>
<sequence>MAFLVEKQLFKALFSFFLLVLLFSDTVLSFRKTIDQKKPCKHFSFYFHDILYDGDNVANATSAAIVSPPGLGNFKFGKFVIFDGPITMDKNYLSKPVARAQGFYFYDMKMDFNSWFSYTLVFNSTEHKGTLNIMGADLMMEPTRDLSVVGGTGDFFMARGIATFVTDLFQGAKYFRVKMDIKLYECY</sequence>
<dbReference type="EMBL" id="AL035394">
    <property type="protein sequence ID" value="CAA23035.1"/>
    <property type="molecule type" value="Genomic_DNA"/>
</dbReference>
<dbReference type="EMBL" id="AL161559">
    <property type="protein sequence ID" value="CAB79324.1"/>
    <property type="molecule type" value="Genomic_DNA"/>
</dbReference>
<dbReference type="EMBL" id="CP002687">
    <property type="protein sequence ID" value="AEE84795.1"/>
    <property type="molecule type" value="Genomic_DNA"/>
</dbReference>
<dbReference type="EMBL" id="BT002439">
    <property type="protein sequence ID" value="AAO00799.1"/>
    <property type="molecule type" value="mRNA"/>
</dbReference>
<dbReference type="EMBL" id="AY088422">
    <property type="protein sequence ID" value="AAM65959.1"/>
    <property type="molecule type" value="mRNA"/>
</dbReference>
<dbReference type="PIR" id="T05601">
    <property type="entry name" value="T05601"/>
</dbReference>
<dbReference type="RefSeq" id="NP_194100.1">
    <property type="nucleotide sequence ID" value="NM_118500.3"/>
</dbReference>
<dbReference type="PDB" id="5LAL">
    <property type="method" value="X-ray"/>
    <property type="resolution" value="1.40 A"/>
    <property type="chains" value="A/B=30-187"/>
</dbReference>
<dbReference type="PDBsum" id="5LAL"/>
<dbReference type="SMR" id="Q9SUQ8"/>
<dbReference type="FunCoup" id="Q9SUQ8">
    <property type="interactions" value="571"/>
</dbReference>
<dbReference type="MINT" id="Q9SUQ8"/>
<dbReference type="STRING" id="3702.Q9SUQ8"/>
<dbReference type="GlyCosmos" id="Q9SUQ8">
    <property type="glycosylation" value="2 sites, No reported glycans"/>
</dbReference>
<dbReference type="GlyGen" id="Q9SUQ8">
    <property type="glycosylation" value="2 sites"/>
</dbReference>
<dbReference type="iPTMnet" id="Q9SUQ8"/>
<dbReference type="PaxDb" id="3702-AT4G23690.1"/>
<dbReference type="ProteomicsDB" id="224122"/>
<dbReference type="DNASU" id="828469"/>
<dbReference type="EnsemblPlants" id="AT4G23690.1">
    <property type="protein sequence ID" value="AT4G23690.1"/>
    <property type="gene ID" value="AT4G23690"/>
</dbReference>
<dbReference type="GeneID" id="828469"/>
<dbReference type="Gramene" id="AT4G23690.1">
    <property type="protein sequence ID" value="AT4G23690.1"/>
    <property type="gene ID" value="AT4G23690"/>
</dbReference>
<dbReference type="KEGG" id="ath:AT4G23690"/>
<dbReference type="Araport" id="AT4G23690"/>
<dbReference type="TAIR" id="AT4G23690">
    <property type="gene designation" value="DIR6"/>
</dbReference>
<dbReference type="eggNOG" id="ENOG502RXV9">
    <property type="taxonomic scope" value="Eukaryota"/>
</dbReference>
<dbReference type="HOGENOM" id="CLU_087111_0_0_1"/>
<dbReference type="InParanoid" id="Q9SUQ8"/>
<dbReference type="OMA" id="KSAYNAW"/>
<dbReference type="OrthoDB" id="674745at2759"/>
<dbReference type="PhylomeDB" id="Q9SUQ8"/>
<dbReference type="PRO" id="PR:Q9SUQ8"/>
<dbReference type="Proteomes" id="UP000006548">
    <property type="component" value="Chromosome 4"/>
</dbReference>
<dbReference type="ExpressionAtlas" id="Q9SUQ8">
    <property type="expression patterns" value="baseline and differential"/>
</dbReference>
<dbReference type="GO" id="GO:0048046">
    <property type="term" value="C:apoplast"/>
    <property type="evidence" value="ECO:0007669"/>
    <property type="project" value="UniProtKB-SubCell"/>
</dbReference>
<dbReference type="GO" id="GO:0042349">
    <property type="term" value="F:guiding stereospecific synthesis activity"/>
    <property type="evidence" value="ECO:0000314"/>
    <property type="project" value="TAIR"/>
</dbReference>
<dbReference type="GO" id="GO:0042802">
    <property type="term" value="F:identical protein binding"/>
    <property type="evidence" value="ECO:0000353"/>
    <property type="project" value="IntAct"/>
</dbReference>
<dbReference type="GO" id="GO:0042803">
    <property type="term" value="F:protein homodimerization activity"/>
    <property type="evidence" value="ECO:0000314"/>
    <property type="project" value="UniProtKB"/>
</dbReference>
<dbReference type="GO" id="GO:1901599">
    <property type="term" value="P:(-)-pinoresinol biosynthetic process"/>
    <property type="evidence" value="ECO:0000314"/>
    <property type="project" value="TAIR"/>
</dbReference>
<dbReference type="GO" id="GO:0050790">
    <property type="term" value="P:regulation of catalytic activity"/>
    <property type="evidence" value="ECO:0000314"/>
    <property type="project" value="TAIR"/>
</dbReference>
<dbReference type="FunFam" id="2.40.480.10:FF:000002">
    <property type="entry name" value="Dirigent protein"/>
    <property type="match status" value="1"/>
</dbReference>
<dbReference type="Gene3D" id="2.40.480.10">
    <property type="entry name" value="Allene oxide cyclase-like"/>
    <property type="match status" value="1"/>
</dbReference>
<dbReference type="InterPro" id="IPR044859">
    <property type="entry name" value="Allene_oxi_cyc_Dirigent"/>
</dbReference>
<dbReference type="InterPro" id="IPR004265">
    <property type="entry name" value="Dirigent"/>
</dbReference>
<dbReference type="PANTHER" id="PTHR46442">
    <property type="entry name" value="DIRIGENT PROTEIN"/>
    <property type="match status" value="1"/>
</dbReference>
<dbReference type="PANTHER" id="PTHR46442:SF8">
    <property type="entry name" value="DIRIGENT PROTEIN 6"/>
    <property type="match status" value="1"/>
</dbReference>
<dbReference type="Pfam" id="PF03018">
    <property type="entry name" value="Dirigent"/>
    <property type="match status" value="1"/>
</dbReference>
<comment type="function">
    <text evidence="1 3">Dirigent proteins impart stereoselectivity on the phenoxy radical-coupling reaction, yielding optically active lignans from two molecules of coniferyl alcohol in the biosynthesis of lignans, flavonolignans, and alkaloids and thus plays a central role in plant secondary metabolism. Enantiocomplementary dirigent protein that mediates the laccase-catalyzed enantioselective oxidative phenol coupling of (E)-coniferyl alcohol to (-)-pinoresinol.</text>
</comment>
<comment type="subunit">
    <text evidence="2">Homodimer.</text>
</comment>
<comment type="interaction">
    <interactant intactId="EBI-7796038">
        <id>Q9SUQ8</id>
    </interactant>
    <interactant intactId="EBI-7796038">
        <id>Q9SUQ8</id>
        <label>DIR6</label>
    </interactant>
    <organismsDiffer>false</organismsDiffer>
    <experiments>2</experiments>
</comment>
<comment type="subcellular location">
    <subcellularLocation>
        <location evidence="4">Secreted</location>
        <location evidence="4">Extracellular space</location>
        <location evidence="4">Apoplast</location>
    </subcellularLocation>
</comment>
<comment type="tissue specificity">
    <text evidence="3">Expressed in roots, cotyledon veins, leaf trichomes, flowers, siliques, and meristems. Present in interfascicular/vascular cambia and developing xylem.</text>
</comment>
<comment type="developmental stage">
    <text evidence="3">In flowers, expressed in the vasculature of petals, stamen filaments, anther microsporangia, and papillar cells of the stigma and style. In siliques, accumulates in the stigmatic region, replum, funiculus, and valve.</text>
</comment>
<comment type="similarity">
    <text evidence="4">Belongs to the plant dirigent protein family.</text>
</comment>